<sequence>MVHVRKNHLTMTAEEKRRFVHAVLEIKRRGIYDRFVKLHIQINSTDYLDKETGKRLGHVNPGFLPWHRQYLLKFEQALQKVDPRVTLPYWDWTTDHGENSPLWSDTFMGGNGRPGDRRVMTGPFARRNGWKLNISVIPEGPEDPALNGNYTHDDRDYLVRDFGTLTPDLPTPQELEQTLDLTVYDCPPWNHTSGGTPPYESFRNHLEGYTKFAWEPRLGKLHGAAHVWTGGHMMYIGSPNDPVFFLNHCMIDRCWALWQARHPDVPHYLPTVPTQDVPDLNTPLGPWHTKTPADLLDHTRFYTYDQ</sequence>
<gene>
    <name evidence="2" type="primary">griF</name>
    <name type="ordered locus">SGR_4246</name>
</gene>
<feature type="chain" id="PRO_0000418500" description="Grixazone synthase">
    <location>
        <begin position="1"/>
        <end position="306"/>
    </location>
</feature>
<feature type="binding site" evidence="5 6">
    <location>
        <position position="39"/>
    </location>
    <ligand>
        <name>Cu(2+)</name>
        <dbReference type="ChEBI" id="CHEBI:29036"/>
        <label>A</label>
    </ligand>
</feature>
<feature type="binding site" evidence="5 6">
    <location>
        <position position="58"/>
    </location>
    <ligand>
        <name>Cu(2+)</name>
        <dbReference type="ChEBI" id="CHEBI:29036"/>
        <label>A</label>
    </ligand>
</feature>
<feature type="binding site" evidence="5 6">
    <location>
        <position position="67"/>
    </location>
    <ligand>
        <name>Cu(2+)</name>
        <dbReference type="ChEBI" id="CHEBI:29036"/>
        <label>A</label>
    </ligand>
</feature>
<feature type="binding site" evidence="5 6">
    <location>
        <position position="222"/>
    </location>
    <ligand>
        <name>Cu(2+)</name>
        <dbReference type="ChEBI" id="CHEBI:29036"/>
        <label>B</label>
    </ligand>
</feature>
<feature type="binding site" evidence="5 6">
    <location>
        <position position="226"/>
    </location>
    <ligand>
        <name>Cu(2+)</name>
        <dbReference type="ChEBI" id="CHEBI:29036"/>
        <label>B</label>
    </ligand>
</feature>
<feature type="binding site" evidence="5 6">
    <location>
        <position position="248"/>
    </location>
    <ligand>
        <name>Cu(2+)</name>
        <dbReference type="ChEBI" id="CHEBI:29036"/>
        <label>B</label>
    </ligand>
</feature>
<reference key="1">
    <citation type="journal article" date="2006" name="J. Biol. Chem.">
        <title>A novel o-aminophenol oxidase responsible for formation of the phenoxazinone chromophore of grixazone.</title>
        <authorList>
            <person name="Suzuki H."/>
            <person name="Furusho Y."/>
            <person name="Higashi T."/>
            <person name="Ohnishi Y."/>
            <person name="Horinouchi S."/>
        </authorList>
    </citation>
    <scope>NUCLEOTIDE SEQUENCE [GENOMIC DNA]</scope>
    <scope>FUNCTION</scope>
    <scope>CATALYTIC ACTIVITY</scope>
    <scope>COFACTOR</scope>
    <scope>BIOPHYSICOCHEMICAL PROPERTIES</scope>
    <scope>DISRUPTION PHENOTYPE</scope>
    <scope>ACTIVITY REGULATION</scope>
    <scope>SUBSTRATE SPECIFICITY</scope>
    <source>
        <strain>JCM 4626 / CBS 651.72 / NBRC 13350 / KCC S-0626 / ISP 5235</strain>
    </source>
</reference>
<reference key="2">
    <citation type="journal article" date="2008" name="J. Bacteriol.">
        <title>Genome sequence of the streptomycin-producing microorganism Streptomyces griseus IFO 13350.</title>
        <authorList>
            <person name="Ohnishi Y."/>
            <person name="Ishikawa J."/>
            <person name="Hara H."/>
            <person name="Suzuki H."/>
            <person name="Ikenoya M."/>
            <person name="Ikeda H."/>
            <person name="Yamashita A."/>
            <person name="Hattori M."/>
            <person name="Horinouchi S."/>
        </authorList>
    </citation>
    <scope>NUCLEOTIDE SEQUENCE [LARGE SCALE GENOMIC DNA]</scope>
    <source>
        <strain>JCM 4626 / CBS 651.72 / NBRC 13350 / KCC S-0626 / ISP 5235</strain>
    </source>
</reference>
<reference key="3">
    <citation type="journal article" date="2009" name="Trends Biotechnol.">
        <title>Phenoxazinone synthase: what's in a name?</title>
        <authorList>
            <person name="Le Roes-Hill M."/>
            <person name="Goodwin C."/>
            <person name="Burton S."/>
        </authorList>
    </citation>
    <scope>REVIEW</scope>
    <scope>FUNCTION</scope>
</reference>
<name>GRIF_STRGG</name>
<evidence type="ECO:0000269" key="1">
    <source>
    </source>
</evidence>
<evidence type="ECO:0000303" key="2">
    <source>
    </source>
</evidence>
<evidence type="ECO:0000303" key="3">
    <source>
    </source>
</evidence>
<evidence type="ECO:0000305" key="4"/>
<evidence type="ECO:0000305" key="5">
    <source>
    </source>
</evidence>
<evidence type="ECO:0000305" key="6">
    <source>
    </source>
</evidence>
<keyword id="KW-0045">Antibiotic biosynthesis</keyword>
<keyword id="KW-0186">Copper</keyword>
<keyword id="KW-0479">Metal-binding</keyword>
<keyword id="KW-0560">Oxidoreductase</keyword>
<organism>
    <name type="scientific">Streptomyces griseus subsp. griseus (strain JCM 4626 / CBS 651.72 / NBRC 13350 / KCC S-0626 / ISP 5235)</name>
    <dbReference type="NCBI Taxonomy" id="455632"/>
    <lineage>
        <taxon>Bacteria</taxon>
        <taxon>Bacillati</taxon>
        <taxon>Actinomycetota</taxon>
        <taxon>Actinomycetes</taxon>
        <taxon>Kitasatosporales</taxon>
        <taxon>Streptomycetaceae</taxon>
        <taxon>Streptomyces</taxon>
    </lineage>
</organism>
<protein>
    <recommendedName>
        <fullName evidence="2">Grixazone synthase</fullName>
        <ecNumber evidence="1">1.10.3.15</ecNumber>
    </recommendedName>
    <alternativeName>
        <fullName evidence="2">Phenoxazinone synthase</fullName>
        <shortName evidence="2">PHS</shortName>
    </alternativeName>
    <alternativeName>
        <fullName evidence="2">o-aminophenol oxidase</fullName>
        <ecNumber evidence="1">1.10.3.4</ecNumber>
    </alternativeName>
</protein>
<accession>B1VTI5</accession>
<accession>Q4W5X1</accession>
<comment type="function">
    <text evidence="1 3">Involved in the biosynthesis of the parasiticide antibiotic grixazone. Catalyzes the oxidation of 3-amino-4-hydroxybenzoate (3,4-AHBOA) to yield the corresponding quinone imine which is then non-enzymatically conjugated with the thiol group of N-acetylcysteine. The resultant compound is oxidized to its quinone imine enzymatically and is then dimerized non-enzymatically with another quinone imine oxidized by GriF to yield grixazone B. 3-amino-4-hydroxybenzaldehyde (3,4-AHBAL) can also be used as substrate to yield grixazone A. In the grixazone biosynthetic pathway, it can also function as an o-aminophenol oxidase that catalyzes the formation of the phenoxazinone chromophore from alpha-aminophenol. It can also use 2-amino-4-methylphenol, and to a lesser extent, 3,4-dihydroxybenzaldehyde, catechol and 3,4-dihydroxy-L-phenylalanine (L-DOPA) as substrates. In contrast to tyrosinases, it does not display monophenolase activity.</text>
</comment>
<comment type="catalytic activity">
    <reaction evidence="1">
        <text>2 3-amino-4-hydroxybenzoate + N-acetyl-L-cysteine + 2 O2 + H(+) = grixazone B + CO2 + 4 H2O</text>
        <dbReference type="Rhea" id="RHEA:41420"/>
        <dbReference type="ChEBI" id="CHEBI:15377"/>
        <dbReference type="ChEBI" id="CHEBI:15378"/>
        <dbReference type="ChEBI" id="CHEBI:15379"/>
        <dbReference type="ChEBI" id="CHEBI:16526"/>
        <dbReference type="ChEBI" id="CHEBI:60005"/>
        <dbReference type="ChEBI" id="CHEBI:73483"/>
        <dbReference type="ChEBI" id="CHEBI:78236"/>
        <dbReference type="EC" id="1.10.3.15"/>
    </reaction>
    <physiologicalReaction direction="left-to-right" evidence="5">
        <dbReference type="Rhea" id="RHEA:41421"/>
    </physiologicalReaction>
</comment>
<comment type="catalytic activity">
    <reaction evidence="1">
        <text>2 3-amino-4-hydroxybenzaldehyde + N-acetyl-L-cysteine + 2 O2 = grixazone A + formate + 3 H2O + H(+)</text>
        <dbReference type="Rhea" id="RHEA:41424"/>
        <dbReference type="ChEBI" id="CHEBI:15377"/>
        <dbReference type="ChEBI" id="CHEBI:15378"/>
        <dbReference type="ChEBI" id="CHEBI:15379"/>
        <dbReference type="ChEBI" id="CHEBI:15740"/>
        <dbReference type="ChEBI" id="CHEBI:73482"/>
        <dbReference type="ChEBI" id="CHEBI:78236"/>
        <dbReference type="ChEBI" id="CHEBI:78237"/>
        <dbReference type="EC" id="1.10.3.15"/>
    </reaction>
    <physiologicalReaction direction="left-to-right" evidence="5">
        <dbReference type="Rhea" id="RHEA:41425"/>
    </physiologicalReaction>
</comment>
<comment type="catalytic activity">
    <reaction evidence="1">
        <text>4 2-aminophenol + 3 O2 = 2 2-aminophenoxazin-3-one + 6 H2O</text>
        <dbReference type="Rhea" id="RHEA:40963"/>
        <dbReference type="ChEBI" id="CHEBI:15377"/>
        <dbReference type="ChEBI" id="CHEBI:15379"/>
        <dbReference type="ChEBI" id="CHEBI:17293"/>
        <dbReference type="ChEBI" id="CHEBI:18112"/>
        <dbReference type="EC" id="1.10.3.4"/>
    </reaction>
    <physiologicalReaction direction="left-to-right" evidence="5">
        <dbReference type="Rhea" id="RHEA:40964"/>
    </physiologicalReaction>
</comment>
<comment type="cofactor">
    <cofactor evidence="1">
        <name>Cu(2+)</name>
        <dbReference type="ChEBI" id="CHEBI:29036"/>
    </cofactor>
    <text evidence="1">Binds 2 copper ions per subunit.</text>
</comment>
<comment type="activity regulation">
    <text evidence="1">Inhibited by 3-amino-4-hydroxybenzensulfonic acid, 4-hydroxy-3-nitrobenzaldehyde, L-tyrosine, p-hydroxybenzaldehyde. Activated by the copper chaperone GriE.</text>
</comment>
<comment type="biophysicochemical properties">
    <kinetics>
        <KM evidence="1">3.5 mM for alpha-aminophenol</KM>
        <KM evidence="1">0.58 mM for 3,4-AHBAL</KM>
        <KM evidence="1">0.75 mM for 2-amino-4-methylphenol</KM>
        <KM evidence="1">0.41 mM for 3,4-dihydroxybenzaldehyde</KM>
        <KM evidence="1">19 mM for catechol</KM>
        <KM evidence="1">5.5 mM for L-DOPA</KM>
        <text evidence="1">kcat is 20 sec(-1) with alpha-aminophenol as substrate. kcat is 14 sec(-1) with 3,4-AHBAL as substrate. kcat is 18 sec(-1) with 2-amino-4-methylphenol as substrate. kcat is 0.8 sec(-1) with 3,4-dihydroxybenzaldehyde as substrate. kcat is 12 sec(-1) with catechol as substrate. kcat is 0.066 sec(-1) with L-DOPA as substrate.</text>
    </kinetics>
    <phDependence>
        <text evidence="1">Optimum pH is between 8.5 and 10.5.</text>
    </phDependence>
    <temperatureDependence>
        <text evidence="1">Optimum temperature is 55 degrees Celsius.</text>
    </temperatureDependence>
</comment>
<comment type="disruption phenotype">
    <text evidence="1">Cells lacking griE and griF show accumulation of the 3-amino-4-hydroxybenzaldehyde (3,4-AHBAL) intermediate.</text>
</comment>
<comment type="similarity">
    <text evidence="4">Belongs to the tyrosinase family.</text>
</comment>
<proteinExistence type="evidence at protein level"/>
<dbReference type="EC" id="1.10.3.15" evidence="1"/>
<dbReference type="EC" id="1.10.3.4" evidence="1"/>
<dbReference type="EMBL" id="AB214954">
    <property type="protein sequence ID" value="BAD99129.1"/>
    <property type="molecule type" value="Genomic_DNA"/>
</dbReference>
<dbReference type="EMBL" id="AB259663">
    <property type="protein sequence ID" value="BAF36648.1"/>
    <property type="molecule type" value="Genomic_DNA"/>
</dbReference>
<dbReference type="EMBL" id="AP009493">
    <property type="protein sequence ID" value="BAG21075.1"/>
    <property type="molecule type" value="Genomic_DNA"/>
</dbReference>
<dbReference type="RefSeq" id="WP_012380459.1">
    <property type="nucleotide sequence ID" value="NC_010572.1"/>
</dbReference>
<dbReference type="SMR" id="B1VTI5"/>
<dbReference type="KEGG" id="sgr:SGR_4246"/>
<dbReference type="PATRIC" id="fig|455632.4.peg.4326"/>
<dbReference type="eggNOG" id="COG2304">
    <property type="taxonomic scope" value="Bacteria"/>
</dbReference>
<dbReference type="HOGENOM" id="CLU_035914_3_0_11"/>
<dbReference type="BioCyc" id="MetaCyc:MONOMER-12101"/>
<dbReference type="Proteomes" id="UP000001685">
    <property type="component" value="Chromosome"/>
</dbReference>
<dbReference type="GO" id="GO:0005507">
    <property type="term" value="F:copper ion binding"/>
    <property type="evidence" value="ECO:0000314"/>
    <property type="project" value="UniProtKB"/>
</dbReference>
<dbReference type="GO" id="GO:0050149">
    <property type="term" value="F:o-aminophenol oxidase activity"/>
    <property type="evidence" value="ECO:0000314"/>
    <property type="project" value="UniProtKB"/>
</dbReference>
<dbReference type="GO" id="GO:0017000">
    <property type="term" value="P:antibiotic biosynthetic process"/>
    <property type="evidence" value="ECO:0007669"/>
    <property type="project" value="UniProtKB-KW"/>
</dbReference>
<dbReference type="Gene3D" id="1.10.1280.10">
    <property type="entry name" value="Di-copper center containing domain from catechol oxidase"/>
    <property type="match status" value="1"/>
</dbReference>
<dbReference type="InterPro" id="IPR008922">
    <property type="entry name" value="Di-copper_centre_dom_sf"/>
</dbReference>
<dbReference type="InterPro" id="IPR050316">
    <property type="entry name" value="Tyrosinase/Hemocyanin"/>
</dbReference>
<dbReference type="InterPro" id="IPR002227">
    <property type="entry name" value="Tyrosinase_Cu-bd"/>
</dbReference>
<dbReference type="PANTHER" id="PTHR11474">
    <property type="entry name" value="TYROSINASE FAMILY MEMBER"/>
    <property type="match status" value="1"/>
</dbReference>
<dbReference type="PANTHER" id="PTHR11474:SF126">
    <property type="entry name" value="TYROSINASE-LIKE PROTEIN TYR-1-RELATED"/>
    <property type="match status" value="1"/>
</dbReference>
<dbReference type="Pfam" id="PF00264">
    <property type="entry name" value="Tyrosinase"/>
    <property type="match status" value="1"/>
</dbReference>
<dbReference type="PRINTS" id="PR00092">
    <property type="entry name" value="TYROSINASE"/>
</dbReference>
<dbReference type="SUPFAM" id="SSF48056">
    <property type="entry name" value="Di-copper centre-containing domain"/>
    <property type="match status" value="1"/>
</dbReference>
<dbReference type="PROSITE" id="PS00497">
    <property type="entry name" value="TYROSINASE_1"/>
    <property type="match status" value="1"/>
</dbReference>
<dbReference type="PROSITE" id="PS00498">
    <property type="entry name" value="TYROSINASE_2"/>
    <property type="match status" value="1"/>
</dbReference>